<reference key="1">
    <citation type="journal article" date="2004" name="Nucleic Acids Res.">
        <title>The genome sequence of Bacillus cereus ATCC 10987 reveals metabolic adaptations and a large plasmid related to Bacillus anthracis pXO1.</title>
        <authorList>
            <person name="Rasko D.A."/>
            <person name="Ravel J."/>
            <person name="Oekstad O.A."/>
            <person name="Helgason E."/>
            <person name="Cer R.Z."/>
            <person name="Jiang L."/>
            <person name="Shores K.A."/>
            <person name="Fouts D.E."/>
            <person name="Tourasse N.J."/>
            <person name="Angiuoli S.V."/>
            <person name="Kolonay J.F."/>
            <person name="Nelson W.C."/>
            <person name="Kolstoe A.-B."/>
            <person name="Fraser C.M."/>
            <person name="Read T.D."/>
        </authorList>
    </citation>
    <scope>NUCLEOTIDE SEQUENCE [LARGE SCALE GENOMIC DNA]</scope>
    <source>
        <strain>ATCC 10987 / NRS 248</strain>
    </source>
</reference>
<sequence>MNHATSELHDESAVTSVPETTRLQDLKALVKMGIVNSNTLTVFTGFWLALHFNGLSVMDNLDKLFFTIVGSGLVMAGVCCLNNYIDRDIDPLMERTKTRPTVTGKYKPGFALTFGLVILLLGFVFLLLTTPMAVLMGFIGAFTYVVLYSLWTKRKYTLNTVVGSISGAVPPLIGWAAIDPSLGHPIAWMLFLIMFIWQIPHFLALAMKRVDEYRNAGIPMLPVVHGFEITKRQIMIWTVCLLPLPFYMSGLGITFMVIATLLNIGWIVLGFYGFRKKDDIKWSVQMFVYSLNYLTILFVSMIVVTFF</sequence>
<comment type="function">
    <text evidence="1">Converts heme B (protoheme IX) to heme O by substitution of the vinyl group on carbon 2 of heme B porphyrin ring with a hydroxyethyl farnesyl side group.</text>
</comment>
<comment type="catalytic activity">
    <reaction evidence="1">
        <text>heme b + (2E,6E)-farnesyl diphosphate + H2O = Fe(II)-heme o + diphosphate</text>
        <dbReference type="Rhea" id="RHEA:28070"/>
        <dbReference type="ChEBI" id="CHEBI:15377"/>
        <dbReference type="ChEBI" id="CHEBI:33019"/>
        <dbReference type="ChEBI" id="CHEBI:60344"/>
        <dbReference type="ChEBI" id="CHEBI:60530"/>
        <dbReference type="ChEBI" id="CHEBI:175763"/>
        <dbReference type="EC" id="2.5.1.141"/>
    </reaction>
</comment>
<comment type="pathway">
    <text evidence="1">Porphyrin-containing compound metabolism; heme O biosynthesis; heme O from protoheme: step 1/1.</text>
</comment>
<comment type="subunit">
    <text evidence="1">Interacts with CtaA.</text>
</comment>
<comment type="subcellular location">
    <subcellularLocation>
        <location evidence="1">Cell membrane</location>
        <topology evidence="1">Multi-pass membrane protein</topology>
    </subcellularLocation>
</comment>
<comment type="miscellaneous">
    <text evidence="1">Carbon 2 of the heme B porphyrin ring is defined according to the Fischer nomenclature.</text>
</comment>
<comment type="similarity">
    <text evidence="1">Belongs to the UbiA prenyltransferase family. Protoheme IX farnesyltransferase subfamily.</text>
</comment>
<accession>Q732C2</accession>
<keyword id="KW-1003">Cell membrane</keyword>
<keyword id="KW-0350">Heme biosynthesis</keyword>
<keyword id="KW-0472">Membrane</keyword>
<keyword id="KW-0808">Transferase</keyword>
<keyword id="KW-0812">Transmembrane</keyword>
<keyword id="KW-1133">Transmembrane helix</keyword>
<dbReference type="EC" id="2.5.1.141" evidence="1"/>
<dbReference type="EMBL" id="AE017194">
    <property type="protein sequence ID" value="AAS42895.1"/>
    <property type="molecule type" value="Genomic_DNA"/>
</dbReference>
<dbReference type="SMR" id="Q732C2"/>
<dbReference type="KEGG" id="bca:BCE_3992"/>
<dbReference type="HOGENOM" id="CLU_029631_0_0_9"/>
<dbReference type="UniPathway" id="UPA00834">
    <property type="reaction ID" value="UER00712"/>
</dbReference>
<dbReference type="Proteomes" id="UP000002527">
    <property type="component" value="Chromosome"/>
</dbReference>
<dbReference type="GO" id="GO:0005886">
    <property type="term" value="C:plasma membrane"/>
    <property type="evidence" value="ECO:0007669"/>
    <property type="project" value="UniProtKB-SubCell"/>
</dbReference>
<dbReference type="GO" id="GO:0008495">
    <property type="term" value="F:protoheme IX farnesyltransferase activity"/>
    <property type="evidence" value="ECO:0007669"/>
    <property type="project" value="UniProtKB-UniRule"/>
</dbReference>
<dbReference type="GO" id="GO:0048034">
    <property type="term" value="P:heme O biosynthetic process"/>
    <property type="evidence" value="ECO:0007669"/>
    <property type="project" value="UniProtKB-UniRule"/>
</dbReference>
<dbReference type="CDD" id="cd13957">
    <property type="entry name" value="PT_UbiA_Cox10"/>
    <property type="match status" value="1"/>
</dbReference>
<dbReference type="FunFam" id="1.10.357.140:FF:000001">
    <property type="entry name" value="Protoheme IX farnesyltransferase"/>
    <property type="match status" value="1"/>
</dbReference>
<dbReference type="Gene3D" id="1.10.357.140">
    <property type="entry name" value="UbiA prenyltransferase"/>
    <property type="match status" value="1"/>
</dbReference>
<dbReference type="HAMAP" id="MF_00154">
    <property type="entry name" value="CyoE_CtaB"/>
    <property type="match status" value="1"/>
</dbReference>
<dbReference type="InterPro" id="IPR006369">
    <property type="entry name" value="Protohaem_IX_farnesylTrfase"/>
</dbReference>
<dbReference type="InterPro" id="IPR000537">
    <property type="entry name" value="UbiA_prenyltransferase"/>
</dbReference>
<dbReference type="InterPro" id="IPR030470">
    <property type="entry name" value="UbiA_prenylTrfase_CS"/>
</dbReference>
<dbReference type="InterPro" id="IPR044878">
    <property type="entry name" value="UbiA_sf"/>
</dbReference>
<dbReference type="NCBIfam" id="TIGR01473">
    <property type="entry name" value="cyoE_ctaB"/>
    <property type="match status" value="1"/>
</dbReference>
<dbReference type="PANTHER" id="PTHR43448">
    <property type="entry name" value="PROTOHEME IX FARNESYLTRANSFERASE, MITOCHONDRIAL"/>
    <property type="match status" value="1"/>
</dbReference>
<dbReference type="PANTHER" id="PTHR43448:SF2">
    <property type="entry name" value="PROTOHEME IX FARNESYLTRANSFERASE, MITOCHONDRIAL"/>
    <property type="match status" value="1"/>
</dbReference>
<dbReference type="Pfam" id="PF01040">
    <property type="entry name" value="UbiA"/>
    <property type="match status" value="1"/>
</dbReference>
<dbReference type="PROSITE" id="PS00943">
    <property type="entry name" value="UBIA"/>
    <property type="match status" value="1"/>
</dbReference>
<proteinExistence type="inferred from homology"/>
<organism>
    <name type="scientific">Bacillus cereus (strain ATCC 10987 / NRS 248)</name>
    <dbReference type="NCBI Taxonomy" id="222523"/>
    <lineage>
        <taxon>Bacteria</taxon>
        <taxon>Bacillati</taxon>
        <taxon>Bacillota</taxon>
        <taxon>Bacilli</taxon>
        <taxon>Bacillales</taxon>
        <taxon>Bacillaceae</taxon>
        <taxon>Bacillus</taxon>
        <taxon>Bacillus cereus group</taxon>
    </lineage>
</organism>
<gene>
    <name evidence="1" type="primary">ctaB</name>
    <name type="ordered locus">BCE_3992</name>
</gene>
<protein>
    <recommendedName>
        <fullName evidence="1">Protoheme IX farnesyltransferase</fullName>
        <ecNumber evidence="1">2.5.1.141</ecNumber>
    </recommendedName>
    <alternativeName>
        <fullName evidence="1">Heme B farnesyltransferase</fullName>
    </alternativeName>
    <alternativeName>
        <fullName evidence="1">Heme O synthase</fullName>
    </alternativeName>
</protein>
<name>COXX_BACC1</name>
<feature type="chain" id="PRO_0000327002" description="Protoheme IX farnesyltransferase">
    <location>
        <begin position="1"/>
        <end position="307"/>
    </location>
</feature>
<feature type="transmembrane region" description="Helical" evidence="1">
    <location>
        <begin position="32"/>
        <end position="52"/>
    </location>
</feature>
<feature type="transmembrane region" description="Helical" evidence="1">
    <location>
        <begin position="65"/>
        <end position="85"/>
    </location>
</feature>
<feature type="transmembrane region" description="Helical" evidence="1">
    <location>
        <begin position="108"/>
        <end position="128"/>
    </location>
</feature>
<feature type="transmembrane region" description="Helical" evidence="1">
    <location>
        <begin position="131"/>
        <end position="151"/>
    </location>
</feature>
<feature type="transmembrane region" description="Helical" evidence="1">
    <location>
        <begin position="158"/>
        <end position="178"/>
    </location>
</feature>
<feature type="transmembrane region" description="Helical" evidence="1">
    <location>
        <begin position="186"/>
        <end position="206"/>
    </location>
</feature>
<feature type="transmembrane region" description="Helical" evidence="1">
    <location>
        <begin position="251"/>
        <end position="271"/>
    </location>
</feature>
<feature type="transmembrane region" description="Helical" evidence="1">
    <location>
        <begin position="287"/>
        <end position="307"/>
    </location>
</feature>
<evidence type="ECO:0000255" key="1">
    <source>
        <dbReference type="HAMAP-Rule" id="MF_00154"/>
    </source>
</evidence>